<sequence>MTTALEEQNAQQAATAGRVVRVIGAVVDVEFPRGELPALYNALTVEVTLESVKKTVVLEVAQHLGDNLIRTIAMAPTDGLVRGAAVTDTARPISVPVGDVVKGHVFNALGDCLDDVSLNNNPEIERWGIHREPPSFDQLEGKTEILETGIKVIDLLTPYVKGGKIGLFGGAGVGKTVLIQEMITRIAREFSGTSVFAGVGERTREGTDLFLEMEEMGVLQDTALVFGQMDEPPGVRMRVALSGLTMAEYFRDVQNQDVLLFIDNIFRFTQAGSEVSTLLGRMPSAVGYQPTLADEMGVLQERITSTKGRSITSLQAVYVPADDYTDPAPATTFAHLDATTELDRSIASKGIYPAVNPLTSTSRILEPAIVGERHYEVSQRVIGILQKNKELQDIIAILGMDELSEEDKITVARARRIERFLGQNFFVAEKFTGLPGSYVPLTDTVDAFERICNGDFDHYPEQAFNGLGGLDDVEAAYKKLTGK</sequence>
<protein>
    <recommendedName>
        <fullName evidence="1">ATP synthase subunit beta</fullName>
        <ecNumber evidence="1">7.1.2.2</ecNumber>
    </recommendedName>
    <alternativeName>
        <fullName evidence="1">ATP synthase F1 sector subunit beta</fullName>
    </alternativeName>
    <alternativeName>
        <fullName evidence="1">F-ATPase subunit beta</fullName>
    </alternativeName>
</protein>
<organism>
    <name type="scientific">Corynebacterium glutamicum (strain R)</name>
    <dbReference type="NCBI Taxonomy" id="340322"/>
    <lineage>
        <taxon>Bacteria</taxon>
        <taxon>Bacillati</taxon>
        <taxon>Actinomycetota</taxon>
        <taxon>Actinomycetes</taxon>
        <taxon>Mycobacteriales</taxon>
        <taxon>Corynebacteriaceae</taxon>
        <taxon>Corynebacterium</taxon>
    </lineage>
</organism>
<feature type="chain" id="PRO_1000055105" description="ATP synthase subunit beta">
    <location>
        <begin position="1"/>
        <end position="483"/>
    </location>
</feature>
<feature type="binding site" evidence="1">
    <location>
        <begin position="169"/>
        <end position="176"/>
    </location>
    <ligand>
        <name>ATP</name>
        <dbReference type="ChEBI" id="CHEBI:30616"/>
    </ligand>
</feature>
<name>ATPB_CORGB</name>
<comment type="function">
    <text evidence="1">Produces ATP from ADP in the presence of a proton gradient across the membrane. The catalytic sites are hosted primarily by the beta subunits.</text>
</comment>
<comment type="catalytic activity">
    <reaction evidence="1">
        <text>ATP + H2O + 4 H(+)(in) = ADP + phosphate + 5 H(+)(out)</text>
        <dbReference type="Rhea" id="RHEA:57720"/>
        <dbReference type="ChEBI" id="CHEBI:15377"/>
        <dbReference type="ChEBI" id="CHEBI:15378"/>
        <dbReference type="ChEBI" id="CHEBI:30616"/>
        <dbReference type="ChEBI" id="CHEBI:43474"/>
        <dbReference type="ChEBI" id="CHEBI:456216"/>
        <dbReference type="EC" id="7.1.2.2"/>
    </reaction>
</comment>
<comment type="subunit">
    <text evidence="1">F-type ATPases have 2 components, CF(1) - the catalytic core - and CF(0) - the membrane proton channel. CF(1) has five subunits: alpha(3), beta(3), gamma(1), delta(1), epsilon(1). CF(0) has three main subunits: a(1), b(2) and c(9-12). The alpha and beta chains form an alternating ring which encloses part of the gamma chain. CF(1) is attached to CF(0) by a central stalk formed by the gamma and epsilon chains, while a peripheral stalk is formed by the delta and b chains.</text>
</comment>
<comment type="subcellular location">
    <subcellularLocation>
        <location evidence="1">Cell membrane</location>
        <topology evidence="1">Peripheral membrane protein</topology>
    </subcellularLocation>
</comment>
<comment type="similarity">
    <text evidence="1">Belongs to the ATPase alpha/beta chains family.</text>
</comment>
<evidence type="ECO:0000255" key="1">
    <source>
        <dbReference type="HAMAP-Rule" id="MF_01347"/>
    </source>
</evidence>
<reference key="1">
    <citation type="journal article" date="2007" name="Microbiology">
        <title>Comparative analysis of the Corynebacterium glutamicum group and complete genome sequence of strain R.</title>
        <authorList>
            <person name="Yukawa H."/>
            <person name="Omumasaba C.A."/>
            <person name="Nonaka H."/>
            <person name="Kos P."/>
            <person name="Okai N."/>
            <person name="Suzuki N."/>
            <person name="Suda M."/>
            <person name="Tsuge Y."/>
            <person name="Watanabe J."/>
            <person name="Ikeda Y."/>
            <person name="Vertes A.A."/>
            <person name="Inui M."/>
        </authorList>
    </citation>
    <scope>NUCLEOTIDE SEQUENCE [LARGE SCALE GENOMIC DNA]</scope>
    <source>
        <strain>R</strain>
    </source>
</reference>
<keyword id="KW-0066">ATP synthesis</keyword>
<keyword id="KW-0067">ATP-binding</keyword>
<keyword id="KW-1003">Cell membrane</keyword>
<keyword id="KW-0139">CF(1)</keyword>
<keyword id="KW-0375">Hydrogen ion transport</keyword>
<keyword id="KW-0406">Ion transport</keyword>
<keyword id="KW-0472">Membrane</keyword>
<keyword id="KW-0547">Nucleotide-binding</keyword>
<keyword id="KW-1278">Translocase</keyword>
<keyword id="KW-0813">Transport</keyword>
<dbReference type="EC" id="7.1.2.2" evidence="1"/>
<dbReference type="EMBL" id="AP009044">
    <property type="protein sequence ID" value="BAF54270.1"/>
    <property type="molecule type" value="Genomic_DNA"/>
</dbReference>
<dbReference type="RefSeq" id="WP_003854838.1">
    <property type="nucleotide sequence ID" value="NC_009342.1"/>
</dbReference>
<dbReference type="SMR" id="A4QDH3"/>
<dbReference type="KEGG" id="cgt:cgR_1290"/>
<dbReference type="HOGENOM" id="CLU_022398_0_2_11"/>
<dbReference type="PhylomeDB" id="A4QDH3"/>
<dbReference type="Proteomes" id="UP000006698">
    <property type="component" value="Chromosome"/>
</dbReference>
<dbReference type="GO" id="GO:0005886">
    <property type="term" value="C:plasma membrane"/>
    <property type="evidence" value="ECO:0007669"/>
    <property type="project" value="UniProtKB-SubCell"/>
</dbReference>
<dbReference type="GO" id="GO:0045259">
    <property type="term" value="C:proton-transporting ATP synthase complex"/>
    <property type="evidence" value="ECO:0007669"/>
    <property type="project" value="UniProtKB-KW"/>
</dbReference>
<dbReference type="GO" id="GO:0005524">
    <property type="term" value="F:ATP binding"/>
    <property type="evidence" value="ECO:0007669"/>
    <property type="project" value="UniProtKB-UniRule"/>
</dbReference>
<dbReference type="GO" id="GO:0016887">
    <property type="term" value="F:ATP hydrolysis activity"/>
    <property type="evidence" value="ECO:0007669"/>
    <property type="project" value="InterPro"/>
</dbReference>
<dbReference type="GO" id="GO:0046933">
    <property type="term" value="F:proton-transporting ATP synthase activity, rotational mechanism"/>
    <property type="evidence" value="ECO:0007669"/>
    <property type="project" value="UniProtKB-UniRule"/>
</dbReference>
<dbReference type="CDD" id="cd18110">
    <property type="entry name" value="ATP-synt_F1_beta_C"/>
    <property type="match status" value="1"/>
</dbReference>
<dbReference type="CDD" id="cd18115">
    <property type="entry name" value="ATP-synt_F1_beta_N"/>
    <property type="match status" value="1"/>
</dbReference>
<dbReference type="CDD" id="cd01133">
    <property type="entry name" value="F1-ATPase_beta_CD"/>
    <property type="match status" value="1"/>
</dbReference>
<dbReference type="FunFam" id="1.10.1140.10:FF:000005">
    <property type="entry name" value="ATP synthase subunit beta"/>
    <property type="match status" value="1"/>
</dbReference>
<dbReference type="FunFam" id="2.40.10.170:FF:000005">
    <property type="entry name" value="ATP synthase subunit beta"/>
    <property type="match status" value="1"/>
</dbReference>
<dbReference type="FunFam" id="3.40.50.300:FF:000004">
    <property type="entry name" value="ATP synthase subunit beta"/>
    <property type="match status" value="1"/>
</dbReference>
<dbReference type="Gene3D" id="2.40.10.170">
    <property type="match status" value="1"/>
</dbReference>
<dbReference type="Gene3D" id="1.10.1140.10">
    <property type="entry name" value="Bovine Mitochondrial F1-atpase, Atp Synthase Beta Chain, Chain D, domain 3"/>
    <property type="match status" value="1"/>
</dbReference>
<dbReference type="Gene3D" id="3.40.50.300">
    <property type="entry name" value="P-loop containing nucleotide triphosphate hydrolases"/>
    <property type="match status" value="1"/>
</dbReference>
<dbReference type="HAMAP" id="MF_01347">
    <property type="entry name" value="ATP_synth_beta_bact"/>
    <property type="match status" value="1"/>
</dbReference>
<dbReference type="InterPro" id="IPR003593">
    <property type="entry name" value="AAA+_ATPase"/>
</dbReference>
<dbReference type="InterPro" id="IPR055190">
    <property type="entry name" value="ATP-synt_VA_C"/>
</dbReference>
<dbReference type="InterPro" id="IPR005722">
    <property type="entry name" value="ATP_synth_F1_bsu"/>
</dbReference>
<dbReference type="InterPro" id="IPR020003">
    <property type="entry name" value="ATPase_a/bsu_AS"/>
</dbReference>
<dbReference type="InterPro" id="IPR050053">
    <property type="entry name" value="ATPase_alpha/beta_chains"/>
</dbReference>
<dbReference type="InterPro" id="IPR004100">
    <property type="entry name" value="ATPase_F1/V1/A1_a/bsu_N"/>
</dbReference>
<dbReference type="InterPro" id="IPR036121">
    <property type="entry name" value="ATPase_F1/V1/A1_a/bsu_N_sf"/>
</dbReference>
<dbReference type="InterPro" id="IPR000194">
    <property type="entry name" value="ATPase_F1/V1/A1_a/bsu_nucl-bd"/>
</dbReference>
<dbReference type="InterPro" id="IPR024034">
    <property type="entry name" value="ATPase_F1/V1_b/a_C"/>
</dbReference>
<dbReference type="InterPro" id="IPR027417">
    <property type="entry name" value="P-loop_NTPase"/>
</dbReference>
<dbReference type="NCBIfam" id="TIGR01039">
    <property type="entry name" value="atpD"/>
    <property type="match status" value="1"/>
</dbReference>
<dbReference type="PANTHER" id="PTHR15184">
    <property type="entry name" value="ATP SYNTHASE"/>
    <property type="match status" value="1"/>
</dbReference>
<dbReference type="PANTHER" id="PTHR15184:SF71">
    <property type="entry name" value="ATP SYNTHASE SUBUNIT BETA, MITOCHONDRIAL"/>
    <property type="match status" value="1"/>
</dbReference>
<dbReference type="Pfam" id="PF00006">
    <property type="entry name" value="ATP-synt_ab"/>
    <property type="match status" value="1"/>
</dbReference>
<dbReference type="Pfam" id="PF02874">
    <property type="entry name" value="ATP-synt_ab_N"/>
    <property type="match status" value="1"/>
</dbReference>
<dbReference type="Pfam" id="PF22919">
    <property type="entry name" value="ATP-synt_VA_C"/>
    <property type="match status" value="1"/>
</dbReference>
<dbReference type="SMART" id="SM00382">
    <property type="entry name" value="AAA"/>
    <property type="match status" value="1"/>
</dbReference>
<dbReference type="SUPFAM" id="SSF47917">
    <property type="entry name" value="C-terminal domain of alpha and beta subunits of F1 ATP synthase"/>
    <property type="match status" value="1"/>
</dbReference>
<dbReference type="SUPFAM" id="SSF50615">
    <property type="entry name" value="N-terminal domain of alpha and beta subunits of F1 ATP synthase"/>
    <property type="match status" value="1"/>
</dbReference>
<dbReference type="SUPFAM" id="SSF52540">
    <property type="entry name" value="P-loop containing nucleoside triphosphate hydrolases"/>
    <property type="match status" value="1"/>
</dbReference>
<dbReference type="PROSITE" id="PS00152">
    <property type="entry name" value="ATPASE_ALPHA_BETA"/>
    <property type="match status" value="1"/>
</dbReference>
<accession>A4QDH3</accession>
<proteinExistence type="inferred from homology"/>
<gene>
    <name evidence="1" type="primary">atpD</name>
    <name type="ordered locus">cgR_1290</name>
</gene>